<dbReference type="EC" id="4.6.1.18" evidence="3"/>
<dbReference type="EMBL" id="AF479629">
    <property type="protein sequence ID" value="AAM14436.1"/>
    <property type="molecule type" value="Genomic_DNA"/>
</dbReference>
<dbReference type="SMR" id="Q8SPY7"/>
<dbReference type="GlyCosmos" id="Q8SPY7">
    <property type="glycosylation" value="5 sites, No reported glycans"/>
</dbReference>
<dbReference type="GO" id="GO:0005615">
    <property type="term" value="C:extracellular space"/>
    <property type="evidence" value="ECO:0007669"/>
    <property type="project" value="TreeGrafter"/>
</dbReference>
<dbReference type="GO" id="GO:0005764">
    <property type="term" value="C:lysosome"/>
    <property type="evidence" value="ECO:0007669"/>
    <property type="project" value="UniProtKB-SubCell"/>
</dbReference>
<dbReference type="GO" id="GO:0016829">
    <property type="term" value="F:lyase activity"/>
    <property type="evidence" value="ECO:0007669"/>
    <property type="project" value="UniProtKB-KW"/>
</dbReference>
<dbReference type="GO" id="GO:0003676">
    <property type="term" value="F:nucleic acid binding"/>
    <property type="evidence" value="ECO:0007669"/>
    <property type="project" value="InterPro"/>
</dbReference>
<dbReference type="GO" id="GO:0004522">
    <property type="term" value="F:ribonuclease A activity"/>
    <property type="evidence" value="ECO:0007669"/>
    <property type="project" value="UniProtKB-EC"/>
</dbReference>
<dbReference type="GO" id="GO:0006935">
    <property type="term" value="P:chemotaxis"/>
    <property type="evidence" value="ECO:0007669"/>
    <property type="project" value="TreeGrafter"/>
</dbReference>
<dbReference type="GO" id="GO:0051607">
    <property type="term" value="P:defense response to virus"/>
    <property type="evidence" value="ECO:0007669"/>
    <property type="project" value="UniProtKB-ARBA"/>
</dbReference>
<dbReference type="GO" id="GO:0002227">
    <property type="term" value="P:innate immune response in mucosa"/>
    <property type="evidence" value="ECO:0007669"/>
    <property type="project" value="TreeGrafter"/>
</dbReference>
<dbReference type="CDD" id="cd06265">
    <property type="entry name" value="RNase_A_canonical"/>
    <property type="match status" value="1"/>
</dbReference>
<dbReference type="FunFam" id="3.10.130.10:FF:000001">
    <property type="entry name" value="Ribonuclease pancreatic"/>
    <property type="match status" value="1"/>
</dbReference>
<dbReference type="Gene3D" id="3.10.130.10">
    <property type="entry name" value="Ribonuclease A-like domain"/>
    <property type="match status" value="1"/>
</dbReference>
<dbReference type="InterPro" id="IPR001427">
    <property type="entry name" value="RNaseA"/>
</dbReference>
<dbReference type="InterPro" id="IPR036816">
    <property type="entry name" value="RNaseA-like_dom_sf"/>
</dbReference>
<dbReference type="InterPro" id="IPR023411">
    <property type="entry name" value="RNaseA_AS"/>
</dbReference>
<dbReference type="InterPro" id="IPR023412">
    <property type="entry name" value="RNaseA_domain"/>
</dbReference>
<dbReference type="PANTHER" id="PTHR11437:SF62">
    <property type="entry name" value="NON-SECRETORY RIBONUCLEASE"/>
    <property type="match status" value="1"/>
</dbReference>
<dbReference type="PANTHER" id="PTHR11437">
    <property type="entry name" value="RIBONUCLEASE"/>
    <property type="match status" value="1"/>
</dbReference>
<dbReference type="Pfam" id="PF00074">
    <property type="entry name" value="RnaseA"/>
    <property type="match status" value="1"/>
</dbReference>
<dbReference type="PRINTS" id="PR00794">
    <property type="entry name" value="RIBONUCLEASE"/>
</dbReference>
<dbReference type="SMART" id="SM00092">
    <property type="entry name" value="RNAse_Pc"/>
    <property type="match status" value="1"/>
</dbReference>
<dbReference type="SUPFAM" id="SSF54076">
    <property type="entry name" value="RNase A-like"/>
    <property type="match status" value="1"/>
</dbReference>
<dbReference type="PROSITE" id="PS00127">
    <property type="entry name" value="RNASE_PANCREATIC"/>
    <property type="match status" value="1"/>
</dbReference>
<proteinExistence type="inferred from homology"/>
<evidence type="ECO:0000250" key="1"/>
<evidence type="ECO:0000250" key="2">
    <source>
        <dbReference type="UniProtKB" id="P10153"/>
    </source>
</evidence>
<evidence type="ECO:0000250" key="3">
    <source>
        <dbReference type="UniProtKB" id="P47784"/>
    </source>
</evidence>
<evidence type="ECO:0000255" key="4"/>
<evidence type="ECO:0000305" key="5"/>
<reference key="1">
    <citation type="journal article" date="2002" name="Proc. Natl. Acad. Sci. U.S.A.">
        <title>Complementary advantageous substitutions in the evolution of an antiviral RNase of higher primates.</title>
        <authorList>
            <person name="Zhang J."/>
            <person name="Rosenberg H.F."/>
        </authorList>
    </citation>
    <scope>NUCLEOTIDE SEQUENCE [GENOMIC DNA]</scope>
</reference>
<gene>
    <name type="primary">RNASE2</name>
    <name type="synonym">EDN</name>
    <name type="synonym">RNS2</name>
</gene>
<sequence length="160" mass="17940">MVPKLFTSPICLLLLLGLMGVEGSLHAKPGQFTWAQWFEIQHINMTSGQCTNAMLVINNYQRRCKNQNTFLLTTFADVVHVCGNPSMPCPSNTSLNNCHHSGVQVPLIHCNLTTPSRRISNCRYTQTTANKYYIVACNNSDPVRDPPQYPVVPVHLDRVI</sequence>
<feature type="signal peptide" evidence="1">
    <location>
        <begin position="1"/>
        <end position="27"/>
    </location>
</feature>
<feature type="chain" id="PRO_0000030879" description="Non-secretory ribonuclease">
    <location>
        <begin position="28"/>
        <end position="160"/>
    </location>
</feature>
<feature type="active site" description="Proton acceptor" evidence="1">
    <location>
        <position position="42"/>
    </location>
</feature>
<feature type="active site" description="Proton donor" evidence="1">
    <location>
        <position position="155"/>
    </location>
</feature>
<feature type="binding site" evidence="1">
    <location>
        <begin position="65"/>
        <end position="69"/>
    </location>
    <ligand>
        <name>substrate</name>
    </ligand>
</feature>
<feature type="modified residue" description="3'-nitrotyrosine" evidence="2">
    <location>
        <position position="60"/>
    </location>
</feature>
<feature type="glycosylation site" description="C-linked (Man) tryptophan" evidence="2">
    <location>
        <position position="34"/>
    </location>
</feature>
<feature type="glycosylation site" description="N-linked (GlcNAc...) asparagine" evidence="4">
    <location>
        <position position="44"/>
    </location>
</feature>
<feature type="glycosylation site" description="N-linked (GlcNAc...) asparagine" evidence="4">
    <location>
        <position position="92"/>
    </location>
</feature>
<feature type="glycosylation site" description="N-linked (GlcNAc...) asparagine" evidence="4">
    <location>
        <position position="111"/>
    </location>
</feature>
<feature type="glycosylation site" description="N-linked (GlcNAc...) asparagine" evidence="4">
    <location>
        <position position="138"/>
    </location>
</feature>
<feature type="disulfide bond" evidence="1">
    <location>
        <begin position="50"/>
        <end position="110"/>
    </location>
</feature>
<feature type="disulfide bond" evidence="1">
    <location>
        <begin position="64"/>
        <end position="122"/>
    </location>
</feature>
<feature type="disulfide bond" evidence="1">
    <location>
        <begin position="82"/>
        <end position="137"/>
    </location>
</feature>
<feature type="disulfide bond" evidence="1">
    <location>
        <begin position="89"/>
        <end position="98"/>
    </location>
</feature>
<comment type="function">
    <text evidence="1">This is a non-secretory ribonuclease. It is a pyrimidine specific nuclease with a slight preference for U. Cytotoxin and helminthotoxin. Possesses a wide variety of biological activities (By similarity).</text>
</comment>
<comment type="catalytic activity">
    <reaction evidence="3">
        <text>an [RNA] containing cytidine + H2O = an [RNA]-3'-cytidine-3'-phosphate + a 5'-hydroxy-ribonucleotide-3'-[RNA].</text>
        <dbReference type="EC" id="4.6.1.18"/>
    </reaction>
</comment>
<comment type="catalytic activity">
    <reaction evidence="3">
        <text>an [RNA] containing uridine + H2O = an [RNA]-3'-uridine-3'-phosphate + a 5'-hydroxy-ribonucleotide-3'-[RNA].</text>
        <dbReference type="EC" id="4.6.1.18"/>
    </reaction>
</comment>
<comment type="subunit">
    <text evidence="1">Interacts with and forms a tight 1:1 complex with RNH1. Dimerization of two such complexes may occur (By similarity).</text>
</comment>
<comment type="subcellular location">
    <subcellularLocation>
        <location evidence="5">Lysosome</location>
    </subcellularLocation>
    <subcellularLocation>
        <location evidence="1">Cytoplasmic granule</location>
    </subcellularLocation>
    <text evidence="1">Matrix of eosinophil's large specific granule.</text>
</comment>
<comment type="similarity">
    <text evidence="5">Belongs to the pancreatic ribonuclease family.</text>
</comment>
<keyword id="KW-1015">Disulfide bond</keyword>
<keyword id="KW-0255">Endonuclease</keyword>
<keyword id="KW-0325">Glycoprotein</keyword>
<keyword id="KW-0378">Hydrolase</keyword>
<keyword id="KW-0456">Lyase</keyword>
<keyword id="KW-0458">Lysosome</keyword>
<keyword id="KW-0944">Nitration</keyword>
<keyword id="KW-0540">Nuclease</keyword>
<keyword id="KW-0732">Signal</keyword>
<organism>
    <name type="scientific">Papio hamadryas</name>
    <name type="common">Hamadryas baboon</name>
    <dbReference type="NCBI Taxonomy" id="9557"/>
    <lineage>
        <taxon>Eukaryota</taxon>
        <taxon>Metazoa</taxon>
        <taxon>Chordata</taxon>
        <taxon>Craniata</taxon>
        <taxon>Vertebrata</taxon>
        <taxon>Euteleostomi</taxon>
        <taxon>Mammalia</taxon>
        <taxon>Eutheria</taxon>
        <taxon>Euarchontoglires</taxon>
        <taxon>Primates</taxon>
        <taxon>Haplorrhini</taxon>
        <taxon>Catarrhini</taxon>
        <taxon>Cercopithecidae</taxon>
        <taxon>Cercopithecinae</taxon>
        <taxon>Papio</taxon>
    </lineage>
</organism>
<name>RNAS2_PAPHA</name>
<protein>
    <recommendedName>
        <fullName>Non-secretory ribonuclease</fullName>
        <ecNumber evidence="3">4.6.1.18</ecNumber>
    </recommendedName>
    <alternativeName>
        <fullName>Eosinophil-derived neurotoxin</fullName>
    </alternativeName>
    <alternativeName>
        <fullName>RNase UpI-2</fullName>
    </alternativeName>
    <alternativeName>
        <fullName>Ribonuclease 2</fullName>
        <shortName>RNase 2</shortName>
    </alternativeName>
    <alternativeName>
        <fullName>Ribonuclease US</fullName>
    </alternativeName>
</protein>
<accession>Q8SPY7</accession>